<comment type="function">
    <text evidence="1">RNA-binding component of the eukaryotic translation initiation factor 3 (eIF-3) complex, which is involved in protein synthesis of a specialized repertoire of mRNAs and, together with other initiation factors, stimulates binding of mRNA and methionyl-tRNAi to the 40S ribosome. The eIF-3 complex specifically targets and initiates translation of a subset of mRNAs involved in cell proliferation.</text>
</comment>
<comment type="subunit">
    <text evidence="1">Component of the eukaryotic translation initiation factor 3 (eIF-3) complex. The eIF-3 complex interacts with pix.</text>
</comment>
<comment type="subcellular location">
    <subcellularLocation>
        <location evidence="1">Cytoplasm</location>
    </subcellularLocation>
</comment>
<comment type="similarity">
    <text evidence="1">Belongs to the eIF-3 subunit A family.</text>
</comment>
<name>EIF3A_DROMO</name>
<evidence type="ECO:0000255" key="1">
    <source>
        <dbReference type="HAMAP-Rule" id="MF_03000"/>
    </source>
</evidence>
<evidence type="ECO:0000255" key="2">
    <source>
        <dbReference type="PROSITE-ProRule" id="PRU01185"/>
    </source>
</evidence>
<evidence type="ECO:0000256" key="3">
    <source>
        <dbReference type="SAM" id="MobiDB-lite"/>
    </source>
</evidence>
<gene>
    <name evidence="1" type="primary">eIF3a</name>
    <name evidence="1" type="synonym">eIF3-S10</name>
    <name type="ORF">GI22072</name>
</gene>
<dbReference type="EMBL" id="CH933806">
    <property type="protein sequence ID" value="EDW16719.1"/>
    <property type="molecule type" value="Genomic_DNA"/>
</dbReference>
<dbReference type="SMR" id="B4KA44"/>
<dbReference type="FunCoup" id="B4KA44">
    <property type="interactions" value="2509"/>
</dbReference>
<dbReference type="EnsemblMetazoa" id="FBtr0426343">
    <property type="protein sequence ID" value="FBpp0384039"/>
    <property type="gene ID" value="FBgn0144801"/>
</dbReference>
<dbReference type="EnsemblMetazoa" id="XM_002001222.4">
    <property type="protein sequence ID" value="XP_002001258.2"/>
    <property type="gene ID" value="LOC6575244"/>
</dbReference>
<dbReference type="GeneID" id="6575244"/>
<dbReference type="KEGG" id="dmo:Dmoj_GI22072"/>
<dbReference type="CTD" id="8661"/>
<dbReference type="eggNOG" id="KOG2072">
    <property type="taxonomic scope" value="Eukaryota"/>
</dbReference>
<dbReference type="HOGENOM" id="CLU_002096_1_0_1"/>
<dbReference type="InParanoid" id="B4KA44"/>
<dbReference type="OMA" id="EHITNKR"/>
<dbReference type="OrthoDB" id="18884at2759"/>
<dbReference type="PhylomeDB" id="B4KA44"/>
<dbReference type="ChiTaRS" id="eIF3-S10">
    <property type="organism name" value="fly"/>
</dbReference>
<dbReference type="Proteomes" id="UP000009192">
    <property type="component" value="Unassembled WGS sequence"/>
</dbReference>
<dbReference type="GO" id="GO:0016282">
    <property type="term" value="C:eukaryotic 43S preinitiation complex"/>
    <property type="evidence" value="ECO:0007669"/>
    <property type="project" value="UniProtKB-UniRule"/>
</dbReference>
<dbReference type="GO" id="GO:0033290">
    <property type="term" value="C:eukaryotic 48S preinitiation complex"/>
    <property type="evidence" value="ECO:0007669"/>
    <property type="project" value="UniProtKB-UniRule"/>
</dbReference>
<dbReference type="GO" id="GO:0005852">
    <property type="term" value="C:eukaryotic translation initiation factor 3 complex"/>
    <property type="evidence" value="ECO:0000250"/>
    <property type="project" value="UniProtKB"/>
</dbReference>
<dbReference type="GO" id="GO:0071540">
    <property type="term" value="C:eukaryotic translation initiation factor 3 complex, eIF3e"/>
    <property type="evidence" value="ECO:0007669"/>
    <property type="project" value="TreeGrafter"/>
</dbReference>
<dbReference type="GO" id="GO:0071541">
    <property type="term" value="C:eukaryotic translation initiation factor 3 complex, eIF3m"/>
    <property type="evidence" value="ECO:0007669"/>
    <property type="project" value="TreeGrafter"/>
</dbReference>
<dbReference type="GO" id="GO:0043614">
    <property type="term" value="C:multi-eIF complex"/>
    <property type="evidence" value="ECO:0007669"/>
    <property type="project" value="TreeGrafter"/>
</dbReference>
<dbReference type="GO" id="GO:0003729">
    <property type="term" value="F:mRNA binding"/>
    <property type="evidence" value="ECO:0007669"/>
    <property type="project" value="TreeGrafter"/>
</dbReference>
<dbReference type="GO" id="GO:0003743">
    <property type="term" value="F:translation initiation factor activity"/>
    <property type="evidence" value="ECO:0000250"/>
    <property type="project" value="UniProtKB"/>
</dbReference>
<dbReference type="GO" id="GO:0001732">
    <property type="term" value="P:formation of cytoplasmic translation initiation complex"/>
    <property type="evidence" value="ECO:0007669"/>
    <property type="project" value="UniProtKB-UniRule"/>
</dbReference>
<dbReference type="GO" id="GO:0006446">
    <property type="term" value="P:regulation of translational initiation"/>
    <property type="evidence" value="ECO:0000250"/>
    <property type="project" value="UniProtKB"/>
</dbReference>
<dbReference type="GO" id="GO:0002188">
    <property type="term" value="P:translation reinitiation"/>
    <property type="evidence" value="ECO:0007669"/>
    <property type="project" value="TreeGrafter"/>
</dbReference>
<dbReference type="FunFam" id="1.25.40.860:FF:000007">
    <property type="entry name" value="Eukaryotic translation initiation factor 3 subunit A"/>
    <property type="match status" value="1"/>
</dbReference>
<dbReference type="FunFam" id="4.10.860.10:FF:000001">
    <property type="entry name" value="Eukaryotic translation initiation factor 3 subunit A"/>
    <property type="match status" value="1"/>
</dbReference>
<dbReference type="Gene3D" id="1.25.40.860">
    <property type="match status" value="2"/>
</dbReference>
<dbReference type="Gene3D" id="4.10.860.10">
    <property type="entry name" value="UVR domain"/>
    <property type="match status" value="1"/>
</dbReference>
<dbReference type="HAMAP" id="MF_03000">
    <property type="entry name" value="eIF3a"/>
    <property type="match status" value="1"/>
</dbReference>
<dbReference type="InterPro" id="IPR027512">
    <property type="entry name" value="EIF3A"/>
</dbReference>
<dbReference type="InterPro" id="IPR054711">
    <property type="entry name" value="eIF3a_PCI_TPR-like"/>
</dbReference>
<dbReference type="InterPro" id="IPR000717">
    <property type="entry name" value="PCI_dom"/>
</dbReference>
<dbReference type="PANTHER" id="PTHR14005:SF0">
    <property type="entry name" value="EUKARYOTIC TRANSLATION INITIATION FACTOR 3 SUBUNIT A"/>
    <property type="match status" value="1"/>
</dbReference>
<dbReference type="PANTHER" id="PTHR14005">
    <property type="entry name" value="EUKARYOTIC TRANSLATION INITIATION FACTOR 3, THETA SUBUNIT"/>
    <property type="match status" value="1"/>
</dbReference>
<dbReference type="Pfam" id="PF22591">
    <property type="entry name" value="eIF3a_PCI_TPR-like"/>
    <property type="match status" value="1"/>
</dbReference>
<dbReference type="Pfam" id="PF01399">
    <property type="entry name" value="PCI"/>
    <property type="match status" value="1"/>
</dbReference>
<dbReference type="SMART" id="SM00088">
    <property type="entry name" value="PINT"/>
    <property type="match status" value="1"/>
</dbReference>
<dbReference type="PROSITE" id="PS50250">
    <property type="entry name" value="PCI"/>
    <property type="match status" value="1"/>
</dbReference>
<reference key="1">
    <citation type="journal article" date="2007" name="Nature">
        <title>Evolution of genes and genomes on the Drosophila phylogeny.</title>
        <authorList>
            <consortium name="Drosophila 12 genomes consortium"/>
        </authorList>
    </citation>
    <scope>NUCLEOTIDE SEQUENCE [LARGE SCALE GENOMIC DNA]</scope>
    <source>
        <strain>Tucson 15081-1352.22</strain>
    </source>
</reference>
<keyword id="KW-0963">Cytoplasm</keyword>
<keyword id="KW-0396">Initiation factor</keyword>
<keyword id="KW-0648">Protein biosynthesis</keyword>
<keyword id="KW-1185">Reference proteome</keyword>
<keyword id="KW-0694">RNA-binding</keyword>
<organism>
    <name type="scientific">Drosophila mojavensis</name>
    <name type="common">Fruit fly</name>
    <dbReference type="NCBI Taxonomy" id="7230"/>
    <lineage>
        <taxon>Eukaryota</taxon>
        <taxon>Metazoa</taxon>
        <taxon>Ecdysozoa</taxon>
        <taxon>Arthropoda</taxon>
        <taxon>Hexapoda</taxon>
        <taxon>Insecta</taxon>
        <taxon>Pterygota</taxon>
        <taxon>Neoptera</taxon>
        <taxon>Endopterygota</taxon>
        <taxon>Diptera</taxon>
        <taxon>Brachycera</taxon>
        <taxon>Muscomorpha</taxon>
        <taxon>Ephydroidea</taxon>
        <taxon>Drosophilidae</taxon>
        <taxon>Drosophila</taxon>
    </lineage>
</organism>
<accession>B4KA44</accession>
<protein>
    <recommendedName>
        <fullName evidence="1">Eukaryotic translation initiation factor 3 subunit A</fullName>
        <shortName evidence="1">eIF3a</shortName>
    </recommendedName>
    <alternativeName>
        <fullName evidence="1">Eukaryotic translation initiation factor 3 subunit 10</fullName>
    </alternativeName>
</protein>
<feature type="chain" id="PRO_0000366338" description="Eukaryotic translation initiation factor 3 subunit A">
    <location>
        <begin position="1"/>
        <end position="1129"/>
    </location>
</feature>
<feature type="domain" description="PCI" evidence="2">
    <location>
        <begin position="319"/>
        <end position="502"/>
    </location>
</feature>
<feature type="region of interest" description="Disordered" evidence="3">
    <location>
        <begin position="590"/>
        <end position="633"/>
    </location>
</feature>
<feature type="region of interest" description="Disordered" evidence="3">
    <location>
        <begin position="836"/>
        <end position="1129"/>
    </location>
</feature>
<feature type="compositionally biased region" description="Basic and acidic residues" evidence="3">
    <location>
        <begin position="836"/>
        <end position="903"/>
    </location>
</feature>
<feature type="compositionally biased region" description="Basic and acidic residues" evidence="3">
    <location>
        <begin position="923"/>
        <end position="964"/>
    </location>
</feature>
<feature type="compositionally biased region" description="Basic and acidic residues" evidence="3">
    <location>
        <begin position="971"/>
        <end position="985"/>
    </location>
</feature>
<feature type="compositionally biased region" description="Basic and acidic residues" evidence="3">
    <location>
        <begin position="994"/>
        <end position="1044"/>
    </location>
</feature>
<feature type="compositionally biased region" description="Basic and acidic residues" evidence="3">
    <location>
        <begin position="1053"/>
        <end position="1076"/>
    </location>
</feature>
<feature type="compositionally biased region" description="Gly residues" evidence="3">
    <location>
        <begin position="1080"/>
        <end position="1091"/>
    </location>
</feature>
<feature type="compositionally biased region" description="Basic and acidic residues" evidence="3">
    <location>
        <begin position="1098"/>
        <end position="1119"/>
    </location>
</feature>
<proteinExistence type="inferred from homology"/>
<sequence>MARYTQRPENALKRANEFIEVGKPLRALDTLQEVFRNKRWNYAYSETVIEPLMFKYLYLCVELKKSHIAKEGLFQYRNMFQLVNVNSLENVIRGYLKMAEEHTEAAQAQSSAAVAVLELDDLDNIATPESILMSAVCGEDAQDRSDRTILLPWVKFLWESYCQCLELLRVNTHCEALYHDIARMAFQFCLKYNRKSEFRRLCDKLRKHLEDICKSSNQTTGVSINKVETQQLCLDTRLYLLDSAIQMELWQEAYKAIEDIHGLMAMSKKTPVPKTMANYYQKLAMVFSKAGNQLFHAAALLKLFQLTRELKKNLTKDDLQRMAAHVLLATLSIPLPSAHPEFDRFIEADKSPLEKAQKLAVLLGLPQPPTRVSLIREVVRLNVPNLVSEDFRNLYNWLEVDFNPLNLCKRIQSIVDTIEASETENTLLTPYIQSLKDVTIMRLIRQISQVYESIEFKRLLELAPFCNIFELEKLLVESVRHNDMQIRIDHQRNSIYFGTDLTESQREYRPDGPTLQSMPSEQIRSQLVNMSTVLTRAVSIVYPNRERDQRAKLRSQMVQHYHEIKDREHQRILQRQKIIEDRKEFIEKQNNAREEEEARRHEEESRKAKLAEQKRLEQEQEERERKRHENEIQAIKEKSLKEKVQQISQTAHGKKMLSKLDEEGIKKLDAEQIAMRESEELQRERKELQSKLKSQEKKIDYFERAKRLEEIPLFEKYLAEKNVKDKEFWEATEATRIENAIAERKDAVSQQERLKRMYPDRDEFLEALKKERASLFVEKLKKFEIALAEERKKRLAERVVRRREERRQAYLRAKEEERFRKEEEIRLAREAEERAAAEARRLEREAEDEKRRQQYEKQRAKEEEAERKIQEDRERLAREVAVERERSEKERDVWRPRGDRSERPSAAPAGGASEWRRNAPTSDRNDRNDRNERNDRSDRNDRNDRSERIERSDRNDRPERKDTDGGADSSWRVRREPVEPQRERGGGAGGGPSGRDDKWRRGGDRSERLGGDRDRDRDRDSFRRNDGPRRDDDRGGFRRDDQPQRDTGSNWRDSPRQNDRDNRDNRRPAGDRRDIRGAGPKEGGGGGGGGNWRTAPSPRDEKPPVKRDQPQDKENKAGDDGEWTSVKRR</sequence>